<accession>Q957B7</accession>
<dbReference type="EMBL" id="AF376845">
    <property type="protein sequence ID" value="AAK57664.1"/>
    <property type="molecule type" value="Genomic_DNA"/>
</dbReference>
<dbReference type="GO" id="GO:0005743">
    <property type="term" value="C:mitochondrial inner membrane"/>
    <property type="evidence" value="ECO:0007669"/>
    <property type="project" value="UniProtKB-SubCell"/>
</dbReference>
<dbReference type="GO" id="GO:0045275">
    <property type="term" value="C:respiratory chain complex III"/>
    <property type="evidence" value="ECO:0007669"/>
    <property type="project" value="InterPro"/>
</dbReference>
<dbReference type="GO" id="GO:0046872">
    <property type="term" value="F:metal ion binding"/>
    <property type="evidence" value="ECO:0007669"/>
    <property type="project" value="UniProtKB-KW"/>
</dbReference>
<dbReference type="GO" id="GO:0008121">
    <property type="term" value="F:ubiquinol-cytochrome-c reductase activity"/>
    <property type="evidence" value="ECO:0007669"/>
    <property type="project" value="InterPro"/>
</dbReference>
<dbReference type="GO" id="GO:0006122">
    <property type="term" value="P:mitochondrial electron transport, ubiquinol to cytochrome c"/>
    <property type="evidence" value="ECO:0007669"/>
    <property type="project" value="TreeGrafter"/>
</dbReference>
<dbReference type="CDD" id="cd00290">
    <property type="entry name" value="cytochrome_b_C"/>
    <property type="match status" value="1"/>
</dbReference>
<dbReference type="CDD" id="cd00284">
    <property type="entry name" value="Cytochrome_b_N"/>
    <property type="match status" value="1"/>
</dbReference>
<dbReference type="FunFam" id="1.20.810.10:FF:000002">
    <property type="entry name" value="Cytochrome b"/>
    <property type="match status" value="1"/>
</dbReference>
<dbReference type="Gene3D" id="1.20.810.10">
    <property type="entry name" value="Cytochrome Bc1 Complex, Chain C"/>
    <property type="match status" value="1"/>
</dbReference>
<dbReference type="InterPro" id="IPR005798">
    <property type="entry name" value="Cyt_b/b6_C"/>
</dbReference>
<dbReference type="InterPro" id="IPR036150">
    <property type="entry name" value="Cyt_b/b6_C_sf"/>
</dbReference>
<dbReference type="InterPro" id="IPR005797">
    <property type="entry name" value="Cyt_b/b6_N"/>
</dbReference>
<dbReference type="InterPro" id="IPR027387">
    <property type="entry name" value="Cytb/b6-like_sf"/>
</dbReference>
<dbReference type="InterPro" id="IPR030689">
    <property type="entry name" value="Cytochrome_b"/>
</dbReference>
<dbReference type="InterPro" id="IPR048260">
    <property type="entry name" value="Cytochrome_b_C_euk/bac"/>
</dbReference>
<dbReference type="InterPro" id="IPR048259">
    <property type="entry name" value="Cytochrome_b_N_euk/bac"/>
</dbReference>
<dbReference type="InterPro" id="IPR016174">
    <property type="entry name" value="Di-haem_cyt_TM"/>
</dbReference>
<dbReference type="PANTHER" id="PTHR19271">
    <property type="entry name" value="CYTOCHROME B"/>
    <property type="match status" value="1"/>
</dbReference>
<dbReference type="PANTHER" id="PTHR19271:SF16">
    <property type="entry name" value="CYTOCHROME B"/>
    <property type="match status" value="1"/>
</dbReference>
<dbReference type="Pfam" id="PF00032">
    <property type="entry name" value="Cytochrom_B_C"/>
    <property type="match status" value="1"/>
</dbReference>
<dbReference type="Pfam" id="PF00033">
    <property type="entry name" value="Cytochrome_B"/>
    <property type="match status" value="1"/>
</dbReference>
<dbReference type="PIRSF" id="PIRSF038885">
    <property type="entry name" value="COB"/>
    <property type="match status" value="1"/>
</dbReference>
<dbReference type="SUPFAM" id="SSF81648">
    <property type="entry name" value="a domain/subunit of cytochrome bc1 complex (Ubiquinol-cytochrome c reductase)"/>
    <property type="match status" value="1"/>
</dbReference>
<dbReference type="SUPFAM" id="SSF81342">
    <property type="entry name" value="Transmembrane di-heme cytochromes"/>
    <property type="match status" value="1"/>
</dbReference>
<dbReference type="PROSITE" id="PS51003">
    <property type="entry name" value="CYTB_CTER"/>
    <property type="match status" value="1"/>
</dbReference>
<dbReference type="PROSITE" id="PS51002">
    <property type="entry name" value="CYTB_NTER"/>
    <property type="match status" value="1"/>
</dbReference>
<comment type="function">
    <text evidence="2">Component of the ubiquinol-cytochrome c reductase complex (complex III or cytochrome b-c1 complex) that is part of the mitochondrial respiratory chain. The b-c1 complex mediates electron transfer from ubiquinol to cytochrome c. Contributes to the generation of a proton gradient across the mitochondrial membrane that is then used for ATP synthesis.</text>
</comment>
<comment type="cofactor">
    <cofactor evidence="2">
        <name>heme b</name>
        <dbReference type="ChEBI" id="CHEBI:60344"/>
    </cofactor>
    <text evidence="2">Binds 2 heme b groups non-covalently.</text>
</comment>
<comment type="subunit">
    <text evidence="2">The cytochrome bc1 complex contains 11 subunits: 3 respiratory subunits (MT-CYB, CYC1 and UQCRFS1), 2 core proteins (UQCRC1 and UQCRC2) and 6 low-molecular weight proteins (UQCRH/QCR6, UQCRB/QCR7, UQCRQ/QCR8, UQCR10/QCR9, UQCR11/QCR10 and a cleavage product of UQCRFS1). This cytochrome bc1 complex then forms a dimer.</text>
</comment>
<comment type="subcellular location">
    <subcellularLocation>
        <location evidence="2">Mitochondrion inner membrane</location>
        <topology evidence="2">Multi-pass membrane protein</topology>
    </subcellularLocation>
</comment>
<comment type="miscellaneous">
    <text evidence="1">Heme 1 (or BL or b562) is low-potential and absorbs at about 562 nm, and heme 2 (or BH or b566) is high-potential and absorbs at about 566 nm.</text>
</comment>
<comment type="similarity">
    <text evidence="3 4">Belongs to the cytochrome b family.</text>
</comment>
<comment type="caution">
    <text evidence="2">The full-length protein contains only eight transmembrane helices, not nine as predicted by bioinformatics tools.</text>
</comment>
<protein>
    <recommendedName>
        <fullName>Cytochrome b</fullName>
    </recommendedName>
    <alternativeName>
        <fullName>Complex III subunit 3</fullName>
    </alternativeName>
    <alternativeName>
        <fullName>Complex III subunit III</fullName>
    </alternativeName>
    <alternativeName>
        <fullName>Cytochrome b-c1 complex subunit 3</fullName>
    </alternativeName>
    <alternativeName>
        <fullName>Ubiquinol-cytochrome-c reductase complex cytochrome b subunit</fullName>
    </alternativeName>
</protein>
<evidence type="ECO:0000250" key="1"/>
<evidence type="ECO:0000250" key="2">
    <source>
        <dbReference type="UniProtKB" id="P00157"/>
    </source>
</evidence>
<evidence type="ECO:0000255" key="3">
    <source>
        <dbReference type="PROSITE-ProRule" id="PRU00967"/>
    </source>
</evidence>
<evidence type="ECO:0000255" key="4">
    <source>
        <dbReference type="PROSITE-ProRule" id="PRU00968"/>
    </source>
</evidence>
<keyword id="KW-0249">Electron transport</keyword>
<keyword id="KW-0349">Heme</keyword>
<keyword id="KW-0408">Iron</keyword>
<keyword id="KW-0472">Membrane</keyword>
<keyword id="KW-0479">Metal-binding</keyword>
<keyword id="KW-0496">Mitochondrion</keyword>
<keyword id="KW-0999">Mitochondrion inner membrane</keyword>
<keyword id="KW-0679">Respiratory chain</keyword>
<keyword id="KW-0812">Transmembrane</keyword>
<keyword id="KW-1133">Transmembrane helix</keyword>
<keyword id="KW-0813">Transport</keyword>
<keyword id="KW-0830">Ubiquinone</keyword>
<feature type="chain" id="PRO_0000061233" description="Cytochrome b">
    <location>
        <begin position="1"/>
        <end position="379"/>
    </location>
</feature>
<feature type="transmembrane region" description="Helical" evidence="2">
    <location>
        <begin position="33"/>
        <end position="53"/>
    </location>
</feature>
<feature type="transmembrane region" description="Helical" evidence="2">
    <location>
        <begin position="77"/>
        <end position="98"/>
    </location>
</feature>
<feature type="transmembrane region" description="Helical" evidence="2">
    <location>
        <begin position="113"/>
        <end position="133"/>
    </location>
</feature>
<feature type="transmembrane region" description="Helical" evidence="2">
    <location>
        <begin position="178"/>
        <end position="198"/>
    </location>
</feature>
<feature type="transmembrane region" description="Helical" evidence="2">
    <location>
        <begin position="226"/>
        <end position="246"/>
    </location>
</feature>
<feature type="transmembrane region" description="Helical" evidence="2">
    <location>
        <begin position="288"/>
        <end position="308"/>
    </location>
</feature>
<feature type="transmembrane region" description="Helical" evidence="2">
    <location>
        <begin position="320"/>
        <end position="340"/>
    </location>
</feature>
<feature type="transmembrane region" description="Helical" evidence="2">
    <location>
        <begin position="347"/>
        <end position="367"/>
    </location>
</feature>
<feature type="binding site" description="axial binding residue" evidence="2">
    <location>
        <position position="83"/>
    </location>
    <ligand>
        <name>heme b</name>
        <dbReference type="ChEBI" id="CHEBI:60344"/>
        <label>b562</label>
    </ligand>
    <ligandPart>
        <name>Fe</name>
        <dbReference type="ChEBI" id="CHEBI:18248"/>
    </ligandPart>
</feature>
<feature type="binding site" description="axial binding residue" evidence="2">
    <location>
        <position position="97"/>
    </location>
    <ligand>
        <name>heme b</name>
        <dbReference type="ChEBI" id="CHEBI:60344"/>
        <label>b566</label>
    </ligand>
    <ligandPart>
        <name>Fe</name>
        <dbReference type="ChEBI" id="CHEBI:18248"/>
    </ligandPart>
</feature>
<feature type="binding site" description="axial binding residue" evidence="2">
    <location>
        <position position="182"/>
    </location>
    <ligand>
        <name>heme b</name>
        <dbReference type="ChEBI" id="CHEBI:60344"/>
        <label>b562</label>
    </ligand>
    <ligandPart>
        <name>Fe</name>
        <dbReference type="ChEBI" id="CHEBI:18248"/>
    </ligandPart>
</feature>
<feature type="binding site" description="axial binding residue" evidence="2">
    <location>
        <position position="196"/>
    </location>
    <ligand>
        <name>heme b</name>
        <dbReference type="ChEBI" id="CHEBI:60344"/>
        <label>b566</label>
    </ligand>
    <ligandPart>
        <name>Fe</name>
        <dbReference type="ChEBI" id="CHEBI:18248"/>
    </ligandPart>
</feature>
<feature type="binding site" evidence="2">
    <location>
        <position position="201"/>
    </location>
    <ligand>
        <name>a ubiquinone</name>
        <dbReference type="ChEBI" id="CHEBI:16389"/>
    </ligand>
</feature>
<sequence>MTNIRKSHPLMKIINNSLIDLPAPSNISSWWNFGSLLGICLALQILTGLFLAMHYTSDTATAFNSVTHICRDVNYGWVLRYLHANGASMFFICLYLHVGRGLYYGSYMHTETWNVGVILLFAVMATAFMGYVLPWGQMSFWGATVITNLLSAIPYIGKDLVEWIWGGFSVDKATLTRFFAFHFLLPFIISALVMVHLLFLHETGSNNPTGIPSDMDMIPFHPYYTIKDVLGLLLMIMILLTLVLFSPDMLGDPDNYMPANPLNTPPHIKPEWYFLFAYAILRSIPNKLGGVLALVLSILILIIIPLLHTSKQRSMTFRPLSQCLFWLLAADLLALTWIGGQPVEHPYIIIGQFASILYFSIIIILMPLTSLVENHLXKW</sequence>
<gene>
    <name type="primary">MT-CYB</name>
    <name type="synonym">COB</name>
    <name type="synonym">CYTB</name>
    <name type="synonym">MTCYB</name>
</gene>
<name>CYB_MYOCA</name>
<proteinExistence type="inferred from homology"/>
<reference key="1">
    <citation type="journal article" date="2001" name="Mol. Phylogenet. Evol.">
        <title>Molecular systematics of bats of the genus Myotis (Vespertilionidae) suggests deterministic ecomorphological convergences.</title>
        <authorList>
            <person name="Ruedi M."/>
            <person name="Mayer F."/>
        </authorList>
    </citation>
    <scope>NUCLEOTIDE SEQUENCE [GENOMIC DNA]</scope>
    <source>
        <strain>Isolate 1212</strain>
    </source>
</reference>
<organism>
    <name type="scientific">Myotis capaccinii</name>
    <name type="common">Long-fingered bat</name>
    <dbReference type="NCBI Taxonomy" id="109477"/>
    <lineage>
        <taxon>Eukaryota</taxon>
        <taxon>Metazoa</taxon>
        <taxon>Chordata</taxon>
        <taxon>Craniata</taxon>
        <taxon>Vertebrata</taxon>
        <taxon>Euteleostomi</taxon>
        <taxon>Mammalia</taxon>
        <taxon>Eutheria</taxon>
        <taxon>Laurasiatheria</taxon>
        <taxon>Chiroptera</taxon>
        <taxon>Yangochiroptera</taxon>
        <taxon>Vespertilionidae</taxon>
        <taxon>Myotis</taxon>
    </lineage>
</organism>
<geneLocation type="mitochondrion"/>